<accession>A5WH78</accession>
<sequence length="432" mass="46525">MTQAISDIKAYMQQVGKHARDASRQLAAANTGDKNAALLIIYEQLKQAKDEILAANKIDMDKGRSNNLDAALLDRLALNESRFEAMLQGLKDVAALPDPIGEVTDMTYRPSGIQLGKMRVPLGVVGMIYESRPNVTLEAASLALKSGNAIILRGGSEAYESNQAIAKYILSGLKQAGLPEHGVQVLQTTDRAAVGELITLTEYVDVIVPRGGKGLIARISQDARVPVIKHLDGNCHTFIDSDADPEIAIKVSVNAKTHRYGTCNTMETLLVDQAIANELLPQIAEAIVAADDAMQLRLDAASRTILQDNAKLGGHLSDATDSDWDTEYLAPILAVKIIDGLDAAIDHINTHGSHHTDVIITNNYSKSQRFIREVDSASVMINASSRFADGFEYGLGAEIGISTDKIHARGPVGLNGLTSQKWIVYGHGEVRS</sequence>
<comment type="function">
    <text evidence="1">Catalyzes the NADPH-dependent reduction of L-glutamate 5-phosphate into L-glutamate 5-semialdehyde and phosphate. The product spontaneously undergoes cyclization to form 1-pyrroline-5-carboxylate.</text>
</comment>
<comment type="catalytic activity">
    <reaction evidence="1">
        <text>L-glutamate 5-semialdehyde + phosphate + NADP(+) = L-glutamyl 5-phosphate + NADPH + H(+)</text>
        <dbReference type="Rhea" id="RHEA:19541"/>
        <dbReference type="ChEBI" id="CHEBI:15378"/>
        <dbReference type="ChEBI" id="CHEBI:43474"/>
        <dbReference type="ChEBI" id="CHEBI:57783"/>
        <dbReference type="ChEBI" id="CHEBI:58066"/>
        <dbReference type="ChEBI" id="CHEBI:58274"/>
        <dbReference type="ChEBI" id="CHEBI:58349"/>
        <dbReference type="EC" id="1.2.1.41"/>
    </reaction>
</comment>
<comment type="pathway">
    <text evidence="1">Amino-acid biosynthesis; L-proline biosynthesis; L-glutamate 5-semialdehyde from L-glutamate: step 2/2.</text>
</comment>
<comment type="subcellular location">
    <subcellularLocation>
        <location evidence="1">Cytoplasm</location>
    </subcellularLocation>
</comment>
<comment type="similarity">
    <text evidence="1">Belongs to the gamma-glutamyl phosphate reductase family.</text>
</comment>
<reference key="1">
    <citation type="submission" date="2007-05" db="EMBL/GenBank/DDBJ databases">
        <title>Complete sequence of chromosome of Psychrobacter sp. PRwf-1.</title>
        <authorList>
            <consortium name="US DOE Joint Genome Institute"/>
            <person name="Copeland A."/>
            <person name="Lucas S."/>
            <person name="Lapidus A."/>
            <person name="Barry K."/>
            <person name="Detter J.C."/>
            <person name="Glavina del Rio T."/>
            <person name="Hammon N."/>
            <person name="Israni S."/>
            <person name="Dalin E."/>
            <person name="Tice H."/>
            <person name="Pitluck S."/>
            <person name="Chain P."/>
            <person name="Malfatti S."/>
            <person name="Shin M."/>
            <person name="Vergez L."/>
            <person name="Schmutz J."/>
            <person name="Larimer F."/>
            <person name="Land M."/>
            <person name="Hauser L."/>
            <person name="Kyrpides N."/>
            <person name="Kim E."/>
            <person name="Tiedje J."/>
            <person name="Richardson P."/>
        </authorList>
    </citation>
    <scope>NUCLEOTIDE SEQUENCE [LARGE SCALE GENOMIC DNA]</scope>
    <source>
        <strain>PRwf-1</strain>
    </source>
</reference>
<gene>
    <name evidence="1" type="primary">proA</name>
    <name type="ordered locus">PsycPRwf_2079</name>
</gene>
<organism>
    <name type="scientific">Psychrobacter sp. (strain PRwf-1)</name>
    <dbReference type="NCBI Taxonomy" id="349106"/>
    <lineage>
        <taxon>Bacteria</taxon>
        <taxon>Pseudomonadati</taxon>
        <taxon>Pseudomonadota</taxon>
        <taxon>Gammaproteobacteria</taxon>
        <taxon>Moraxellales</taxon>
        <taxon>Moraxellaceae</taxon>
        <taxon>Psychrobacter</taxon>
    </lineage>
</organism>
<name>PROA_PSYWF</name>
<protein>
    <recommendedName>
        <fullName evidence="1">Gamma-glutamyl phosphate reductase</fullName>
        <shortName evidence="1">GPR</shortName>
        <ecNumber evidence="1">1.2.1.41</ecNumber>
    </recommendedName>
    <alternativeName>
        <fullName evidence="1">Glutamate-5-semialdehyde dehydrogenase</fullName>
    </alternativeName>
    <alternativeName>
        <fullName evidence="1">Glutamyl-gamma-semialdehyde dehydrogenase</fullName>
        <shortName evidence="1">GSA dehydrogenase</shortName>
    </alternativeName>
</protein>
<proteinExistence type="inferred from homology"/>
<dbReference type="EC" id="1.2.1.41" evidence="1"/>
<dbReference type="EMBL" id="CP000713">
    <property type="protein sequence ID" value="ABQ95019.1"/>
    <property type="molecule type" value="Genomic_DNA"/>
</dbReference>
<dbReference type="SMR" id="A5WH78"/>
<dbReference type="STRING" id="349106.PsycPRwf_2079"/>
<dbReference type="KEGG" id="prw:PsycPRwf_2079"/>
<dbReference type="eggNOG" id="COG0014">
    <property type="taxonomic scope" value="Bacteria"/>
</dbReference>
<dbReference type="HOGENOM" id="CLU_030231_0_0_6"/>
<dbReference type="UniPathway" id="UPA00098">
    <property type="reaction ID" value="UER00360"/>
</dbReference>
<dbReference type="GO" id="GO:0005737">
    <property type="term" value="C:cytoplasm"/>
    <property type="evidence" value="ECO:0007669"/>
    <property type="project" value="UniProtKB-SubCell"/>
</dbReference>
<dbReference type="GO" id="GO:0004350">
    <property type="term" value="F:glutamate-5-semialdehyde dehydrogenase activity"/>
    <property type="evidence" value="ECO:0007669"/>
    <property type="project" value="UniProtKB-UniRule"/>
</dbReference>
<dbReference type="GO" id="GO:0050661">
    <property type="term" value="F:NADP binding"/>
    <property type="evidence" value="ECO:0007669"/>
    <property type="project" value="InterPro"/>
</dbReference>
<dbReference type="GO" id="GO:0055129">
    <property type="term" value="P:L-proline biosynthetic process"/>
    <property type="evidence" value="ECO:0007669"/>
    <property type="project" value="UniProtKB-UniRule"/>
</dbReference>
<dbReference type="CDD" id="cd07079">
    <property type="entry name" value="ALDH_F18-19_ProA-GPR"/>
    <property type="match status" value="1"/>
</dbReference>
<dbReference type="FunFam" id="3.40.309.10:FF:000006">
    <property type="entry name" value="Gamma-glutamyl phosphate reductase"/>
    <property type="match status" value="1"/>
</dbReference>
<dbReference type="Gene3D" id="3.40.605.10">
    <property type="entry name" value="Aldehyde Dehydrogenase, Chain A, domain 1"/>
    <property type="match status" value="1"/>
</dbReference>
<dbReference type="Gene3D" id="3.40.309.10">
    <property type="entry name" value="Aldehyde Dehydrogenase, Chain A, domain 2"/>
    <property type="match status" value="1"/>
</dbReference>
<dbReference type="HAMAP" id="MF_00412">
    <property type="entry name" value="ProA"/>
    <property type="match status" value="1"/>
</dbReference>
<dbReference type="InterPro" id="IPR016161">
    <property type="entry name" value="Ald_DH/histidinol_DH"/>
</dbReference>
<dbReference type="InterPro" id="IPR016163">
    <property type="entry name" value="Ald_DH_C"/>
</dbReference>
<dbReference type="InterPro" id="IPR016162">
    <property type="entry name" value="Ald_DH_N"/>
</dbReference>
<dbReference type="InterPro" id="IPR015590">
    <property type="entry name" value="Aldehyde_DH_dom"/>
</dbReference>
<dbReference type="InterPro" id="IPR012134">
    <property type="entry name" value="Glu-5-SA_DH"/>
</dbReference>
<dbReference type="InterPro" id="IPR000965">
    <property type="entry name" value="GPR_dom"/>
</dbReference>
<dbReference type="NCBIfam" id="NF001221">
    <property type="entry name" value="PRK00197.1"/>
    <property type="match status" value="1"/>
</dbReference>
<dbReference type="NCBIfam" id="TIGR00407">
    <property type="entry name" value="proA"/>
    <property type="match status" value="1"/>
</dbReference>
<dbReference type="PANTHER" id="PTHR11063:SF8">
    <property type="entry name" value="DELTA-1-PYRROLINE-5-CARBOXYLATE SYNTHASE"/>
    <property type="match status" value="1"/>
</dbReference>
<dbReference type="PANTHER" id="PTHR11063">
    <property type="entry name" value="GLUTAMATE SEMIALDEHYDE DEHYDROGENASE"/>
    <property type="match status" value="1"/>
</dbReference>
<dbReference type="Pfam" id="PF00171">
    <property type="entry name" value="Aldedh"/>
    <property type="match status" value="2"/>
</dbReference>
<dbReference type="PIRSF" id="PIRSF000151">
    <property type="entry name" value="GPR"/>
    <property type="match status" value="1"/>
</dbReference>
<dbReference type="SUPFAM" id="SSF53720">
    <property type="entry name" value="ALDH-like"/>
    <property type="match status" value="1"/>
</dbReference>
<feature type="chain" id="PRO_0000340908" description="Gamma-glutamyl phosphate reductase">
    <location>
        <begin position="1"/>
        <end position="432"/>
    </location>
</feature>
<evidence type="ECO:0000255" key="1">
    <source>
        <dbReference type="HAMAP-Rule" id="MF_00412"/>
    </source>
</evidence>
<keyword id="KW-0028">Amino-acid biosynthesis</keyword>
<keyword id="KW-0963">Cytoplasm</keyword>
<keyword id="KW-0521">NADP</keyword>
<keyword id="KW-0560">Oxidoreductase</keyword>
<keyword id="KW-0641">Proline biosynthesis</keyword>